<name>EFG_HYPNA</name>
<organism>
    <name type="scientific">Hyphomonas neptunium (strain ATCC 15444)</name>
    <dbReference type="NCBI Taxonomy" id="228405"/>
    <lineage>
        <taxon>Bacteria</taxon>
        <taxon>Pseudomonadati</taxon>
        <taxon>Pseudomonadota</taxon>
        <taxon>Alphaproteobacteria</taxon>
        <taxon>Hyphomonadales</taxon>
        <taxon>Hyphomonadaceae</taxon>
        <taxon>Hyphomonas</taxon>
    </lineage>
</organism>
<sequence>MAREYPLERYRNFGIIAHIDAGKTTTTERVLYYTGKSHKIGEVHDGAATMDWMEQEQERGITITSAATTTFWERTEDGSTALSPKYRFNIIDTPGHVDFTIEVERSLAVLDGAVVLLDGNAGVEPQTETVWRQADRYKVPRIVFVNKMDKTGADFFNCVAMIKDRTGATPAPIQMPIGSETELEGHIDLVTMTEWVWEGEDLGASWVLRPVRESLKAKAEEMRAHLVELAVEMDDAAMEAFLEGKEPDVPALRALIRKGTLALKFVPILCGSAFKNKGVQPMLNGVVDYLPSPLDVPAYLGFKPGDETETRDIPRSADDGQPFAGLAFKIMNDPYMGTLTFTRIYSGKLSKGDAFLNATKGKKERVGRMVMMHANKQDEITEAFAGDIVALAGLKETTTGDTVCDPAQPVVLETMTFPQPVIEIAVEPKTKADQEKMSVGLQRLAAEDPSFRVETNFESGQTIMKGMGELHLDILIDRLRREFKVEANIGQPQVAYREKIGRAADIDYTHKKQSGGTGQFARIKLTFEPLEAGSGFQFVSAIVGGAVPKEYIPGVQKGLEMAKENGLLAGYPVTDFRATLTDGAFHDVDSSVLAFEIAARGAFRELKGKGDPRLMEPIMKVEVVTPEDYMGDVIGDLNSRRGQIQGSEARGIATAITAMVPLVNMFGYVSNLRGMSQGRAQFTMFFDHYDEVPRAEAQKIIQEVSGS</sequence>
<proteinExistence type="inferred from homology"/>
<keyword id="KW-0963">Cytoplasm</keyword>
<keyword id="KW-0251">Elongation factor</keyword>
<keyword id="KW-0342">GTP-binding</keyword>
<keyword id="KW-0547">Nucleotide-binding</keyword>
<keyword id="KW-0648">Protein biosynthesis</keyword>
<keyword id="KW-1185">Reference proteome</keyword>
<dbReference type="EMBL" id="CP000158">
    <property type="protein sequence ID" value="ABI78537.1"/>
    <property type="molecule type" value="Genomic_DNA"/>
</dbReference>
<dbReference type="RefSeq" id="WP_011647829.1">
    <property type="nucleotide sequence ID" value="NC_008358.1"/>
</dbReference>
<dbReference type="SMR" id="Q0BYB1"/>
<dbReference type="STRING" id="228405.HNE_2854"/>
<dbReference type="KEGG" id="hne:HNE_2854"/>
<dbReference type="eggNOG" id="COG0480">
    <property type="taxonomic scope" value="Bacteria"/>
</dbReference>
<dbReference type="HOGENOM" id="CLU_002794_4_1_5"/>
<dbReference type="Proteomes" id="UP000001959">
    <property type="component" value="Chromosome"/>
</dbReference>
<dbReference type="GO" id="GO:0005737">
    <property type="term" value="C:cytoplasm"/>
    <property type="evidence" value="ECO:0007669"/>
    <property type="project" value="UniProtKB-SubCell"/>
</dbReference>
<dbReference type="GO" id="GO:0005525">
    <property type="term" value="F:GTP binding"/>
    <property type="evidence" value="ECO:0007669"/>
    <property type="project" value="UniProtKB-UniRule"/>
</dbReference>
<dbReference type="GO" id="GO:0003924">
    <property type="term" value="F:GTPase activity"/>
    <property type="evidence" value="ECO:0007669"/>
    <property type="project" value="InterPro"/>
</dbReference>
<dbReference type="GO" id="GO:0003746">
    <property type="term" value="F:translation elongation factor activity"/>
    <property type="evidence" value="ECO:0007669"/>
    <property type="project" value="UniProtKB-UniRule"/>
</dbReference>
<dbReference type="GO" id="GO:0032790">
    <property type="term" value="P:ribosome disassembly"/>
    <property type="evidence" value="ECO:0007669"/>
    <property type="project" value="TreeGrafter"/>
</dbReference>
<dbReference type="CDD" id="cd01886">
    <property type="entry name" value="EF-G"/>
    <property type="match status" value="1"/>
</dbReference>
<dbReference type="CDD" id="cd16262">
    <property type="entry name" value="EFG_III"/>
    <property type="match status" value="1"/>
</dbReference>
<dbReference type="CDD" id="cd01434">
    <property type="entry name" value="EFG_mtEFG1_IV"/>
    <property type="match status" value="1"/>
</dbReference>
<dbReference type="CDD" id="cd03713">
    <property type="entry name" value="EFG_mtEFG_C"/>
    <property type="match status" value="1"/>
</dbReference>
<dbReference type="CDD" id="cd04088">
    <property type="entry name" value="EFG_mtEFG_II"/>
    <property type="match status" value="1"/>
</dbReference>
<dbReference type="FunFam" id="2.40.30.10:FF:000006">
    <property type="entry name" value="Elongation factor G"/>
    <property type="match status" value="1"/>
</dbReference>
<dbReference type="FunFam" id="3.30.230.10:FF:000003">
    <property type="entry name" value="Elongation factor G"/>
    <property type="match status" value="1"/>
</dbReference>
<dbReference type="FunFam" id="3.30.70.240:FF:000001">
    <property type="entry name" value="Elongation factor G"/>
    <property type="match status" value="1"/>
</dbReference>
<dbReference type="FunFam" id="3.30.70.870:FF:000001">
    <property type="entry name" value="Elongation factor G"/>
    <property type="match status" value="1"/>
</dbReference>
<dbReference type="FunFam" id="3.40.50.300:FF:000029">
    <property type="entry name" value="Elongation factor G"/>
    <property type="match status" value="1"/>
</dbReference>
<dbReference type="Gene3D" id="3.30.230.10">
    <property type="match status" value="1"/>
</dbReference>
<dbReference type="Gene3D" id="3.30.70.240">
    <property type="match status" value="1"/>
</dbReference>
<dbReference type="Gene3D" id="3.30.70.870">
    <property type="entry name" value="Elongation Factor G (Translational Gtpase), domain 3"/>
    <property type="match status" value="1"/>
</dbReference>
<dbReference type="Gene3D" id="3.40.50.300">
    <property type="entry name" value="P-loop containing nucleotide triphosphate hydrolases"/>
    <property type="match status" value="1"/>
</dbReference>
<dbReference type="Gene3D" id="2.40.30.10">
    <property type="entry name" value="Translation factors"/>
    <property type="match status" value="1"/>
</dbReference>
<dbReference type="HAMAP" id="MF_00054_B">
    <property type="entry name" value="EF_G_EF_2_B"/>
    <property type="match status" value="1"/>
</dbReference>
<dbReference type="InterPro" id="IPR053905">
    <property type="entry name" value="EF-G-like_DII"/>
</dbReference>
<dbReference type="InterPro" id="IPR041095">
    <property type="entry name" value="EFG_II"/>
</dbReference>
<dbReference type="InterPro" id="IPR009022">
    <property type="entry name" value="EFG_III"/>
</dbReference>
<dbReference type="InterPro" id="IPR035647">
    <property type="entry name" value="EFG_III/V"/>
</dbReference>
<dbReference type="InterPro" id="IPR047872">
    <property type="entry name" value="EFG_IV"/>
</dbReference>
<dbReference type="InterPro" id="IPR035649">
    <property type="entry name" value="EFG_V"/>
</dbReference>
<dbReference type="InterPro" id="IPR000640">
    <property type="entry name" value="EFG_V-like"/>
</dbReference>
<dbReference type="InterPro" id="IPR031157">
    <property type="entry name" value="G_TR_CS"/>
</dbReference>
<dbReference type="InterPro" id="IPR027417">
    <property type="entry name" value="P-loop_NTPase"/>
</dbReference>
<dbReference type="InterPro" id="IPR020568">
    <property type="entry name" value="Ribosomal_Su5_D2-typ_SF"/>
</dbReference>
<dbReference type="InterPro" id="IPR014721">
    <property type="entry name" value="Ribsml_uS5_D2-typ_fold_subgr"/>
</dbReference>
<dbReference type="InterPro" id="IPR005225">
    <property type="entry name" value="Small_GTP-bd"/>
</dbReference>
<dbReference type="InterPro" id="IPR000795">
    <property type="entry name" value="T_Tr_GTP-bd_dom"/>
</dbReference>
<dbReference type="InterPro" id="IPR009000">
    <property type="entry name" value="Transl_B-barrel_sf"/>
</dbReference>
<dbReference type="InterPro" id="IPR004540">
    <property type="entry name" value="Transl_elong_EFG/EF2"/>
</dbReference>
<dbReference type="InterPro" id="IPR005517">
    <property type="entry name" value="Transl_elong_EFG/EF2_IV"/>
</dbReference>
<dbReference type="NCBIfam" id="TIGR00484">
    <property type="entry name" value="EF-G"/>
    <property type="match status" value="1"/>
</dbReference>
<dbReference type="NCBIfam" id="NF009381">
    <property type="entry name" value="PRK12740.1-5"/>
    <property type="match status" value="1"/>
</dbReference>
<dbReference type="NCBIfam" id="TIGR00231">
    <property type="entry name" value="small_GTP"/>
    <property type="match status" value="1"/>
</dbReference>
<dbReference type="PANTHER" id="PTHR43261:SF1">
    <property type="entry name" value="RIBOSOME-RELEASING FACTOR 2, MITOCHONDRIAL"/>
    <property type="match status" value="1"/>
</dbReference>
<dbReference type="PANTHER" id="PTHR43261">
    <property type="entry name" value="TRANSLATION ELONGATION FACTOR G-RELATED"/>
    <property type="match status" value="1"/>
</dbReference>
<dbReference type="Pfam" id="PF22042">
    <property type="entry name" value="EF-G_D2"/>
    <property type="match status" value="1"/>
</dbReference>
<dbReference type="Pfam" id="PF00679">
    <property type="entry name" value="EFG_C"/>
    <property type="match status" value="1"/>
</dbReference>
<dbReference type="Pfam" id="PF14492">
    <property type="entry name" value="EFG_III"/>
    <property type="match status" value="1"/>
</dbReference>
<dbReference type="Pfam" id="PF03764">
    <property type="entry name" value="EFG_IV"/>
    <property type="match status" value="1"/>
</dbReference>
<dbReference type="Pfam" id="PF00009">
    <property type="entry name" value="GTP_EFTU"/>
    <property type="match status" value="1"/>
</dbReference>
<dbReference type="PRINTS" id="PR00315">
    <property type="entry name" value="ELONGATNFCT"/>
</dbReference>
<dbReference type="SMART" id="SM00838">
    <property type="entry name" value="EFG_C"/>
    <property type="match status" value="1"/>
</dbReference>
<dbReference type="SMART" id="SM00889">
    <property type="entry name" value="EFG_IV"/>
    <property type="match status" value="1"/>
</dbReference>
<dbReference type="SUPFAM" id="SSF54980">
    <property type="entry name" value="EF-G C-terminal domain-like"/>
    <property type="match status" value="2"/>
</dbReference>
<dbReference type="SUPFAM" id="SSF52540">
    <property type="entry name" value="P-loop containing nucleoside triphosphate hydrolases"/>
    <property type="match status" value="1"/>
</dbReference>
<dbReference type="SUPFAM" id="SSF54211">
    <property type="entry name" value="Ribosomal protein S5 domain 2-like"/>
    <property type="match status" value="1"/>
</dbReference>
<dbReference type="SUPFAM" id="SSF50447">
    <property type="entry name" value="Translation proteins"/>
    <property type="match status" value="1"/>
</dbReference>
<dbReference type="PROSITE" id="PS00301">
    <property type="entry name" value="G_TR_1"/>
    <property type="match status" value="1"/>
</dbReference>
<dbReference type="PROSITE" id="PS51722">
    <property type="entry name" value="G_TR_2"/>
    <property type="match status" value="1"/>
</dbReference>
<feature type="chain" id="PRO_0000263461" description="Elongation factor G">
    <location>
        <begin position="1"/>
        <end position="707"/>
    </location>
</feature>
<feature type="domain" description="tr-type G">
    <location>
        <begin position="8"/>
        <end position="294"/>
    </location>
</feature>
<feature type="binding site" evidence="1">
    <location>
        <begin position="17"/>
        <end position="24"/>
    </location>
    <ligand>
        <name>GTP</name>
        <dbReference type="ChEBI" id="CHEBI:37565"/>
    </ligand>
</feature>
<feature type="binding site" evidence="1">
    <location>
        <begin position="92"/>
        <end position="96"/>
    </location>
    <ligand>
        <name>GTP</name>
        <dbReference type="ChEBI" id="CHEBI:37565"/>
    </ligand>
</feature>
<feature type="binding site" evidence="1">
    <location>
        <begin position="146"/>
        <end position="149"/>
    </location>
    <ligand>
        <name>GTP</name>
        <dbReference type="ChEBI" id="CHEBI:37565"/>
    </ligand>
</feature>
<comment type="function">
    <text evidence="1">Catalyzes the GTP-dependent ribosomal translocation step during translation elongation. During this step, the ribosome changes from the pre-translocational (PRE) to the post-translocational (POST) state as the newly formed A-site-bound peptidyl-tRNA and P-site-bound deacylated tRNA move to the P and E sites, respectively. Catalyzes the coordinated movement of the two tRNA molecules, the mRNA and conformational changes in the ribosome.</text>
</comment>
<comment type="subcellular location">
    <subcellularLocation>
        <location evidence="1">Cytoplasm</location>
    </subcellularLocation>
</comment>
<comment type="similarity">
    <text evidence="1">Belongs to the TRAFAC class translation factor GTPase superfamily. Classic translation factor GTPase family. EF-G/EF-2 subfamily.</text>
</comment>
<gene>
    <name evidence="1" type="primary">fusA</name>
    <name type="ordered locus">HNE_2854</name>
</gene>
<evidence type="ECO:0000255" key="1">
    <source>
        <dbReference type="HAMAP-Rule" id="MF_00054"/>
    </source>
</evidence>
<accession>Q0BYB1</accession>
<reference key="1">
    <citation type="journal article" date="2006" name="J. Bacteriol.">
        <title>Comparative genomic evidence for a close relationship between the dimorphic prosthecate bacteria Hyphomonas neptunium and Caulobacter crescentus.</title>
        <authorList>
            <person name="Badger J.H."/>
            <person name="Hoover T.R."/>
            <person name="Brun Y.V."/>
            <person name="Weiner R.M."/>
            <person name="Laub M.T."/>
            <person name="Alexandre G."/>
            <person name="Mrazek J."/>
            <person name="Ren Q."/>
            <person name="Paulsen I.T."/>
            <person name="Nelson K.E."/>
            <person name="Khouri H.M."/>
            <person name="Radune D."/>
            <person name="Sosa J."/>
            <person name="Dodson R.J."/>
            <person name="Sullivan S.A."/>
            <person name="Rosovitz M.J."/>
            <person name="Madupu R."/>
            <person name="Brinkac L.M."/>
            <person name="Durkin A.S."/>
            <person name="Daugherty S.C."/>
            <person name="Kothari S.P."/>
            <person name="Giglio M.G."/>
            <person name="Zhou L."/>
            <person name="Haft D.H."/>
            <person name="Selengut J.D."/>
            <person name="Davidsen T.M."/>
            <person name="Yang Q."/>
            <person name="Zafar N."/>
            <person name="Ward N.L."/>
        </authorList>
    </citation>
    <scope>NUCLEOTIDE SEQUENCE [LARGE SCALE GENOMIC DNA]</scope>
    <source>
        <strain>ATCC 15444</strain>
    </source>
</reference>
<protein>
    <recommendedName>
        <fullName evidence="1">Elongation factor G</fullName>
        <shortName evidence="1">EF-G</shortName>
    </recommendedName>
</protein>